<gene>
    <name type="primary">ZNF624</name>
    <name type="synonym">KIAA1349</name>
</gene>
<keyword id="KW-0025">Alternative splicing</keyword>
<keyword id="KW-0238">DNA-binding</keyword>
<keyword id="KW-0479">Metal-binding</keyword>
<keyword id="KW-0539">Nucleus</keyword>
<keyword id="KW-1267">Proteomics identification</keyword>
<keyword id="KW-1185">Reference proteome</keyword>
<keyword id="KW-0677">Repeat</keyword>
<keyword id="KW-0804">Transcription</keyword>
<keyword id="KW-0805">Transcription regulation</keyword>
<keyword id="KW-0862">Zinc</keyword>
<keyword id="KW-0863">Zinc-finger</keyword>
<organism>
    <name type="scientific">Homo sapiens</name>
    <name type="common">Human</name>
    <dbReference type="NCBI Taxonomy" id="9606"/>
    <lineage>
        <taxon>Eukaryota</taxon>
        <taxon>Metazoa</taxon>
        <taxon>Chordata</taxon>
        <taxon>Craniata</taxon>
        <taxon>Vertebrata</taxon>
        <taxon>Euteleostomi</taxon>
        <taxon>Mammalia</taxon>
        <taxon>Eutheria</taxon>
        <taxon>Euarchontoglires</taxon>
        <taxon>Primates</taxon>
        <taxon>Haplorrhini</taxon>
        <taxon>Catarrhini</taxon>
        <taxon>Hominidae</taxon>
        <taxon>Homo</taxon>
    </lineage>
</organism>
<name>ZN624_HUMAN</name>
<comment type="function">
    <text>May be involved in transcriptional regulation.</text>
</comment>
<comment type="interaction">
    <interactant intactId="EBI-9116427">
        <id>Q9P2J8</id>
    </interactant>
    <interactant intactId="EBI-11975051">
        <id>Q8TD16-2</id>
        <label>BICD2</label>
    </interactant>
    <organismsDiffer>false</organismsDiffer>
    <experiments>3</experiments>
</comment>
<comment type="interaction">
    <interactant intactId="EBI-9116427">
        <id>Q9P2J8</id>
    </interactant>
    <interactant intactId="EBI-5916454">
        <id>A6NEM1</id>
        <label>GOLGA6L9</label>
    </interactant>
    <organismsDiffer>false</organismsDiffer>
    <experiments>3</experiments>
</comment>
<comment type="interaction">
    <interactant intactId="EBI-9116427">
        <id>Q9P2J8</id>
    </interactant>
    <interactant intactId="EBI-10176379">
        <id>P59991</id>
        <label>KRTAP12-2</label>
    </interactant>
    <organismsDiffer>false</organismsDiffer>
    <experiments>3</experiments>
</comment>
<comment type="interaction">
    <interactant intactId="EBI-9116427">
        <id>Q9P2J8</id>
    </interactant>
    <interactant intactId="EBI-742948">
        <id>Q5JR59</id>
        <label>MTUS2</label>
    </interactant>
    <organismsDiffer>false</organismsDiffer>
    <experiments>3</experiments>
</comment>
<comment type="interaction">
    <interactant intactId="EBI-9116427">
        <id>Q9P2J8</id>
    </interactant>
    <interactant intactId="EBI-11522433">
        <id>Q5JR59-3</id>
        <label>MTUS2</label>
    </interactant>
    <organismsDiffer>false</organismsDiffer>
    <experiments>6</experiments>
</comment>
<comment type="interaction">
    <interactant intactId="EBI-9116427">
        <id>Q9P2J8</id>
    </interactant>
    <interactant intactId="EBI-79165">
        <id>Q9NRD5</id>
        <label>PICK1</label>
    </interactant>
    <organismsDiffer>false</organismsDiffer>
    <experiments>3</experiments>
</comment>
<comment type="subcellular location">
    <subcellularLocation>
        <location evidence="8">Nucleus</location>
    </subcellularLocation>
</comment>
<comment type="alternative products">
    <event type="alternative splicing"/>
    <isoform>
        <id>Q9P2J8-1</id>
        <name>1</name>
        <sequence type="displayed"/>
    </isoform>
    <isoform>
        <id>Q9P2J8-2</id>
        <name>2</name>
        <sequence type="described" ref="VSP_037538"/>
    </isoform>
</comment>
<comment type="similarity">
    <text evidence="8">Belongs to the krueppel C2H2-type zinc-finger protein family.</text>
</comment>
<comment type="sequence caution" evidence="8">
    <conflict type="erroneous initiation">
        <sequence resource="EMBL-CDS" id="BAA92587"/>
    </conflict>
</comment>
<reference key="1">
    <citation type="journal article" date="2000" name="DNA Res.">
        <title>Prediction of the coding sequences of unidentified human genes. XVI. The complete sequences of 150 new cDNA clones from brain which code for large proteins in vitro.</title>
        <authorList>
            <person name="Nagase T."/>
            <person name="Kikuno R."/>
            <person name="Ishikawa K."/>
            <person name="Hirosawa M."/>
            <person name="Ohara O."/>
        </authorList>
    </citation>
    <scope>NUCLEOTIDE SEQUENCE [LARGE SCALE MRNA] (ISOFORM 2)</scope>
    <scope>VARIANT ASN-135</scope>
    <source>
        <tissue>Brain</tissue>
    </source>
</reference>
<reference key="2">
    <citation type="journal article" date="2004" name="Nat. Genet.">
        <title>Complete sequencing and characterization of 21,243 full-length human cDNAs.</title>
        <authorList>
            <person name="Ota T."/>
            <person name="Suzuki Y."/>
            <person name="Nishikawa T."/>
            <person name="Otsuki T."/>
            <person name="Sugiyama T."/>
            <person name="Irie R."/>
            <person name="Wakamatsu A."/>
            <person name="Hayashi K."/>
            <person name="Sato H."/>
            <person name="Nagai K."/>
            <person name="Kimura K."/>
            <person name="Makita H."/>
            <person name="Sekine M."/>
            <person name="Obayashi M."/>
            <person name="Nishi T."/>
            <person name="Shibahara T."/>
            <person name="Tanaka T."/>
            <person name="Ishii S."/>
            <person name="Yamamoto J."/>
            <person name="Saito K."/>
            <person name="Kawai Y."/>
            <person name="Isono Y."/>
            <person name="Nakamura Y."/>
            <person name="Nagahari K."/>
            <person name="Murakami K."/>
            <person name="Yasuda T."/>
            <person name="Iwayanagi T."/>
            <person name="Wagatsuma M."/>
            <person name="Shiratori A."/>
            <person name="Sudo H."/>
            <person name="Hosoiri T."/>
            <person name="Kaku Y."/>
            <person name="Kodaira H."/>
            <person name="Kondo H."/>
            <person name="Sugawara M."/>
            <person name="Takahashi M."/>
            <person name="Kanda K."/>
            <person name="Yokoi T."/>
            <person name="Furuya T."/>
            <person name="Kikkawa E."/>
            <person name="Omura Y."/>
            <person name="Abe K."/>
            <person name="Kamihara K."/>
            <person name="Katsuta N."/>
            <person name="Sato K."/>
            <person name="Tanikawa M."/>
            <person name="Yamazaki M."/>
            <person name="Ninomiya K."/>
            <person name="Ishibashi T."/>
            <person name="Yamashita H."/>
            <person name="Murakawa K."/>
            <person name="Fujimori K."/>
            <person name="Tanai H."/>
            <person name="Kimata M."/>
            <person name="Watanabe M."/>
            <person name="Hiraoka S."/>
            <person name="Chiba Y."/>
            <person name="Ishida S."/>
            <person name="Ono Y."/>
            <person name="Takiguchi S."/>
            <person name="Watanabe S."/>
            <person name="Yosida M."/>
            <person name="Hotuta T."/>
            <person name="Kusano J."/>
            <person name="Kanehori K."/>
            <person name="Takahashi-Fujii A."/>
            <person name="Hara H."/>
            <person name="Tanase T.-O."/>
            <person name="Nomura Y."/>
            <person name="Togiya S."/>
            <person name="Komai F."/>
            <person name="Hara R."/>
            <person name="Takeuchi K."/>
            <person name="Arita M."/>
            <person name="Imose N."/>
            <person name="Musashino K."/>
            <person name="Yuuki H."/>
            <person name="Oshima A."/>
            <person name="Sasaki N."/>
            <person name="Aotsuka S."/>
            <person name="Yoshikawa Y."/>
            <person name="Matsunawa H."/>
            <person name="Ichihara T."/>
            <person name="Shiohata N."/>
            <person name="Sano S."/>
            <person name="Moriya S."/>
            <person name="Momiyama H."/>
            <person name="Satoh N."/>
            <person name="Takami S."/>
            <person name="Terashima Y."/>
            <person name="Suzuki O."/>
            <person name="Nakagawa S."/>
            <person name="Senoh A."/>
            <person name="Mizoguchi H."/>
            <person name="Goto Y."/>
            <person name="Shimizu F."/>
            <person name="Wakebe H."/>
            <person name="Hishigaki H."/>
            <person name="Watanabe T."/>
            <person name="Sugiyama A."/>
            <person name="Takemoto M."/>
            <person name="Kawakami B."/>
            <person name="Yamazaki M."/>
            <person name="Watanabe K."/>
            <person name="Kumagai A."/>
            <person name="Itakura S."/>
            <person name="Fukuzumi Y."/>
            <person name="Fujimori Y."/>
            <person name="Komiyama M."/>
            <person name="Tashiro H."/>
            <person name="Tanigami A."/>
            <person name="Fujiwara T."/>
            <person name="Ono T."/>
            <person name="Yamada K."/>
            <person name="Fujii Y."/>
            <person name="Ozaki K."/>
            <person name="Hirao M."/>
            <person name="Ohmori Y."/>
            <person name="Kawabata A."/>
            <person name="Hikiji T."/>
            <person name="Kobatake N."/>
            <person name="Inagaki H."/>
            <person name="Ikema Y."/>
            <person name="Okamoto S."/>
            <person name="Okitani R."/>
            <person name="Kawakami T."/>
            <person name="Noguchi S."/>
            <person name="Itoh T."/>
            <person name="Shigeta K."/>
            <person name="Senba T."/>
            <person name="Matsumura K."/>
            <person name="Nakajima Y."/>
            <person name="Mizuno T."/>
            <person name="Morinaga M."/>
            <person name="Sasaki M."/>
            <person name="Togashi T."/>
            <person name="Oyama M."/>
            <person name="Hata H."/>
            <person name="Watanabe M."/>
            <person name="Komatsu T."/>
            <person name="Mizushima-Sugano J."/>
            <person name="Satoh T."/>
            <person name="Shirai Y."/>
            <person name="Takahashi Y."/>
            <person name="Nakagawa K."/>
            <person name="Okumura K."/>
            <person name="Nagase T."/>
            <person name="Nomura N."/>
            <person name="Kikuchi H."/>
            <person name="Masuho Y."/>
            <person name="Yamashita R."/>
            <person name="Nakai K."/>
            <person name="Yada T."/>
            <person name="Nakamura Y."/>
            <person name="Ohara O."/>
            <person name="Isogai T."/>
            <person name="Sugano S."/>
        </authorList>
    </citation>
    <scope>NUCLEOTIDE SEQUENCE [LARGE SCALE MRNA] (ISOFORM 1)</scope>
    <scope>VARIANT ASN-135</scope>
    <source>
        <tissue>Tongue</tissue>
    </source>
</reference>
<reference key="3">
    <citation type="journal article" date="2006" name="Nature">
        <title>DNA sequence of human chromosome 17 and analysis of rearrangement in the human lineage.</title>
        <authorList>
            <person name="Zody M.C."/>
            <person name="Garber M."/>
            <person name="Adams D.J."/>
            <person name="Sharpe T."/>
            <person name="Harrow J."/>
            <person name="Lupski J.R."/>
            <person name="Nicholson C."/>
            <person name="Searle S.M."/>
            <person name="Wilming L."/>
            <person name="Young S.K."/>
            <person name="Abouelleil A."/>
            <person name="Allen N.R."/>
            <person name="Bi W."/>
            <person name="Bloom T."/>
            <person name="Borowsky M.L."/>
            <person name="Bugalter B.E."/>
            <person name="Butler J."/>
            <person name="Chang J.L."/>
            <person name="Chen C.-K."/>
            <person name="Cook A."/>
            <person name="Corum B."/>
            <person name="Cuomo C.A."/>
            <person name="de Jong P.J."/>
            <person name="DeCaprio D."/>
            <person name="Dewar K."/>
            <person name="FitzGerald M."/>
            <person name="Gilbert J."/>
            <person name="Gibson R."/>
            <person name="Gnerre S."/>
            <person name="Goldstein S."/>
            <person name="Grafham D.V."/>
            <person name="Grocock R."/>
            <person name="Hafez N."/>
            <person name="Hagopian D.S."/>
            <person name="Hart E."/>
            <person name="Norman C.H."/>
            <person name="Humphray S."/>
            <person name="Jaffe D.B."/>
            <person name="Jones M."/>
            <person name="Kamal M."/>
            <person name="Khodiyar V.K."/>
            <person name="LaButti K."/>
            <person name="Laird G."/>
            <person name="Lehoczky J."/>
            <person name="Liu X."/>
            <person name="Lokyitsang T."/>
            <person name="Loveland J."/>
            <person name="Lui A."/>
            <person name="Macdonald P."/>
            <person name="Major J.E."/>
            <person name="Matthews L."/>
            <person name="Mauceli E."/>
            <person name="McCarroll S.A."/>
            <person name="Mihalev A.H."/>
            <person name="Mudge J."/>
            <person name="Nguyen C."/>
            <person name="Nicol R."/>
            <person name="O'Leary S.B."/>
            <person name="Osoegawa K."/>
            <person name="Schwartz D.C."/>
            <person name="Shaw-Smith C."/>
            <person name="Stankiewicz P."/>
            <person name="Steward C."/>
            <person name="Swarbreck D."/>
            <person name="Venkataraman V."/>
            <person name="Whittaker C.A."/>
            <person name="Yang X."/>
            <person name="Zimmer A.R."/>
            <person name="Bradley A."/>
            <person name="Hubbard T."/>
            <person name="Birren B.W."/>
            <person name="Rogers J."/>
            <person name="Lander E.S."/>
            <person name="Nusbaum C."/>
        </authorList>
    </citation>
    <scope>NUCLEOTIDE SEQUENCE [LARGE SCALE GENOMIC DNA]</scope>
</reference>
<reference key="4">
    <citation type="journal article" date="2004" name="Genome Res.">
        <title>The status, quality, and expansion of the NIH full-length cDNA project: the Mammalian Gene Collection (MGC).</title>
        <authorList>
            <consortium name="The MGC Project Team"/>
        </authorList>
    </citation>
    <scope>NUCLEOTIDE SEQUENCE [LARGE SCALE MRNA] (ISOFORM 2)</scope>
</reference>
<reference key="5">
    <citation type="journal article" date="2006" name="Science">
        <title>The consensus coding sequences of human breast and colorectal cancers.</title>
        <authorList>
            <person name="Sjoeblom T."/>
            <person name="Jones S."/>
            <person name="Wood L.D."/>
            <person name="Parsons D.W."/>
            <person name="Lin J."/>
            <person name="Barber T.D."/>
            <person name="Mandelker D."/>
            <person name="Leary R.J."/>
            <person name="Ptak J."/>
            <person name="Silliman N."/>
            <person name="Szabo S."/>
            <person name="Buckhaults P."/>
            <person name="Farrell C."/>
            <person name="Meeh P."/>
            <person name="Markowitz S.D."/>
            <person name="Willis J."/>
            <person name="Dawson D."/>
            <person name="Willson J.K.V."/>
            <person name="Gazdar A.F."/>
            <person name="Hartigan J."/>
            <person name="Wu L."/>
            <person name="Liu C."/>
            <person name="Parmigiani G."/>
            <person name="Park B.H."/>
            <person name="Bachman K.E."/>
            <person name="Papadopoulos N."/>
            <person name="Vogelstein B."/>
            <person name="Kinzler K.W."/>
            <person name="Velculescu V.E."/>
        </authorList>
    </citation>
    <scope>VARIANT [LARGE SCALE ANALYSIS] SER-558</scope>
</reference>
<feature type="chain" id="PRO_0000047695" description="Zinc finger protein 624">
    <location>
        <begin position="1"/>
        <end position="865"/>
    </location>
</feature>
<feature type="domain" description="KRAB" evidence="2">
    <location>
        <begin position="54"/>
        <end position="125"/>
    </location>
</feature>
<feature type="zinc finger region" description="C2H2-type 1" evidence="1">
    <location>
        <begin position="276"/>
        <end position="298"/>
    </location>
</feature>
<feature type="zinc finger region" description="C2H2-type 2" evidence="1">
    <location>
        <begin position="304"/>
        <end position="326"/>
    </location>
</feature>
<feature type="zinc finger region" description="C2H2-type 3" evidence="1">
    <location>
        <begin position="332"/>
        <end position="354"/>
    </location>
</feature>
<feature type="zinc finger region" description="C2H2-type 4; degenerate" evidence="1">
    <location>
        <begin position="360"/>
        <end position="382"/>
    </location>
</feature>
<feature type="zinc finger region" description="C2H2-type 5" evidence="1">
    <location>
        <begin position="388"/>
        <end position="410"/>
    </location>
</feature>
<feature type="zinc finger region" description="C2H2-type 6" evidence="1">
    <location>
        <begin position="416"/>
        <end position="438"/>
    </location>
</feature>
<feature type="zinc finger region" description="C2H2-type 7" evidence="1">
    <location>
        <begin position="444"/>
        <end position="466"/>
    </location>
</feature>
<feature type="zinc finger region" description="C2H2-type 8" evidence="1">
    <location>
        <begin position="472"/>
        <end position="494"/>
    </location>
</feature>
<feature type="zinc finger region" description="C2H2-type 9" evidence="1">
    <location>
        <begin position="500"/>
        <end position="522"/>
    </location>
</feature>
<feature type="zinc finger region" description="C2H2-type 10" evidence="1">
    <location>
        <begin position="528"/>
        <end position="550"/>
    </location>
</feature>
<feature type="zinc finger region" description="C2H2-type 11" evidence="1">
    <location>
        <begin position="556"/>
        <end position="578"/>
    </location>
</feature>
<feature type="zinc finger region" description="C2H2-type 12" evidence="1">
    <location>
        <begin position="584"/>
        <end position="606"/>
    </location>
</feature>
<feature type="zinc finger region" description="C2H2-type 13" evidence="1">
    <location>
        <begin position="612"/>
        <end position="634"/>
    </location>
</feature>
<feature type="zinc finger region" description="C2H2-type 14" evidence="1">
    <location>
        <begin position="640"/>
        <end position="662"/>
    </location>
</feature>
<feature type="zinc finger region" description="C2H2-type 15" evidence="1">
    <location>
        <begin position="668"/>
        <end position="690"/>
    </location>
</feature>
<feature type="zinc finger region" description="C2H2-type 16" evidence="1">
    <location>
        <begin position="696"/>
        <end position="718"/>
    </location>
</feature>
<feature type="zinc finger region" description="C2H2-type 17" evidence="1">
    <location>
        <begin position="724"/>
        <end position="746"/>
    </location>
</feature>
<feature type="zinc finger region" description="C2H2-type 18" evidence="1">
    <location>
        <begin position="752"/>
        <end position="774"/>
    </location>
</feature>
<feature type="zinc finger region" description="C2H2-type 19" evidence="1">
    <location>
        <begin position="780"/>
        <end position="802"/>
    </location>
</feature>
<feature type="zinc finger region" description="C2H2-type 20" evidence="1">
    <location>
        <begin position="808"/>
        <end position="830"/>
    </location>
</feature>
<feature type="zinc finger region" description="C2H2-type 21" evidence="1">
    <location>
        <begin position="836"/>
        <end position="858"/>
    </location>
</feature>
<feature type="splice variant" id="VSP_037538" description="In isoform 2." evidence="6 7">
    <location>
        <begin position="1"/>
        <end position="126"/>
    </location>
</feature>
<feature type="sequence variant" id="VAR_058001" description="In dbSNP:rs8065506." evidence="3 4">
    <original>K</original>
    <variation>N</variation>
    <location>
        <position position="135"/>
    </location>
</feature>
<feature type="sequence variant" id="VAR_035592" description="In a colorectal cancer sample; somatic mutation." evidence="5">
    <original>C</original>
    <variation>S</variation>
    <location>
        <position position="558"/>
    </location>
</feature>
<feature type="sequence conflict" description="In Ref. 2; BAD18548." evidence="8" ref="2">
    <original>R</original>
    <variation>C</variation>
    <location>
        <position position="576"/>
    </location>
</feature>
<feature type="sequence conflict" description="In Ref. 4; AAI03947." evidence="8" ref="4">
    <original>S</original>
    <variation>T</variation>
    <location>
        <position position="747"/>
    </location>
</feature>
<sequence>MSLQDSTLSREGKPEGEIMAAVFFSVGRLSPEVTQPDEDLHLQAEETQLVKESVTFKDVAIDFTLEEWRLMDPTQRNLHKDVMLENYRNLVSLGLAVSKPDMISHLENGKGPWVTVREISRIPYPDMEPKPATKKATRTKAISEDLSQEAILEKLTENGLWDSRMEGLWKWNDRILRLQNNQENHLSQRIIPLKKTPTSQRGFRFESILIPEPGIATEELHSRCQTQEENFTENLNLITDTHLGKIICKEMKGSKAIRQTSELTLGKKSNNKEKPYKCSTCEKAFHYRSLLIQHQRTHTKEKPYECNECGKTFSQPSYLSQHKKIHTGEKPYKCNECGKAFIASSSLMVHQRIHTKEKPYQCNVCGKSFSQCARLNQHQRIQTGEKPYKCSECGKAFSDKSKLARHQETHNGEKPYKCDDCGKAFRNKSYLSVHQKTHTEEKPYQCNECGKSFKNTTIFNVHQRIHTGEKPFRCNECGKAYRSNSSLIVHIRTHTGEKPYECNECGKAFNRIANFTEHQRIHTGEKPYKCNECGKAFINYSCLTVHHRMHTGEKPYKCTECGKAFMRSSSLIIHQRIHTEEKPYLCNECGESFRIKSHLTVHQRIHTGEKPYKCTDCERAFTKMVNLKEHQKIHTGVKPYKCYDCGKSFRTKSYLIVHQRTHTGEKPYKCNECEKAFTNTSQLTVHQRRHTGEKPYKCNECGKVFTSNSGFNTHQRTHTGEKPFKCNDCGKAFSQMVHVTEHQKIHSGEKPYKCDVCGKAFRRGSYLTVHWRTHTGEKPYTCKECGKGCITLSQLTLHQRIHTGERPYKCEECGKAFRTNSDFTVHLRMHTGEKPYKCNECGKAFRSSSSLTVHQRIHQRETQLI</sequence>
<evidence type="ECO:0000255" key="1">
    <source>
        <dbReference type="PROSITE-ProRule" id="PRU00042"/>
    </source>
</evidence>
<evidence type="ECO:0000255" key="2">
    <source>
        <dbReference type="PROSITE-ProRule" id="PRU00119"/>
    </source>
</evidence>
<evidence type="ECO:0000269" key="3">
    <source>
    </source>
</evidence>
<evidence type="ECO:0000269" key="4">
    <source>
    </source>
</evidence>
<evidence type="ECO:0000269" key="5">
    <source>
    </source>
</evidence>
<evidence type="ECO:0000303" key="6">
    <source>
    </source>
</evidence>
<evidence type="ECO:0000303" key="7">
    <source>
    </source>
</evidence>
<evidence type="ECO:0000305" key="8"/>
<dbReference type="EMBL" id="AB037770">
    <property type="protein sequence ID" value="BAA92587.1"/>
    <property type="status" value="ALT_INIT"/>
    <property type="molecule type" value="mRNA"/>
</dbReference>
<dbReference type="EMBL" id="AK131401">
    <property type="protein sequence ID" value="BAD18548.1"/>
    <property type="molecule type" value="mRNA"/>
</dbReference>
<dbReference type="EMBL" id="AC092714">
    <property type="status" value="NOT_ANNOTATED_CDS"/>
    <property type="molecule type" value="Genomic_DNA"/>
</dbReference>
<dbReference type="EMBL" id="AC098850">
    <property type="status" value="NOT_ANNOTATED_CDS"/>
    <property type="molecule type" value="Genomic_DNA"/>
</dbReference>
<dbReference type="EMBL" id="BC103943">
    <property type="protein sequence ID" value="AAI03944.1"/>
    <property type="molecule type" value="mRNA"/>
</dbReference>
<dbReference type="EMBL" id="BC103944">
    <property type="protein sequence ID" value="AAI03945.1"/>
    <property type="molecule type" value="mRNA"/>
</dbReference>
<dbReference type="EMBL" id="BC103946">
    <property type="protein sequence ID" value="AAI03947.1"/>
    <property type="molecule type" value="mRNA"/>
</dbReference>
<dbReference type="CCDS" id="CCDS11180.1">
    <molecule id="Q9P2J8-1"/>
</dbReference>
<dbReference type="RefSeq" id="NP_065838.2">
    <molecule id="Q9P2J8-1"/>
    <property type="nucleotide sequence ID" value="NM_020787.4"/>
</dbReference>
<dbReference type="RefSeq" id="XP_006721625.1">
    <molecule id="Q9P2J8-1"/>
    <property type="nucleotide sequence ID" value="XM_006721562.5"/>
</dbReference>
<dbReference type="SMR" id="Q9P2J8"/>
<dbReference type="BioGRID" id="121605">
    <property type="interactions" value="43"/>
</dbReference>
<dbReference type="FunCoup" id="Q9P2J8">
    <property type="interactions" value="334"/>
</dbReference>
<dbReference type="IntAct" id="Q9P2J8">
    <property type="interactions" value="41"/>
</dbReference>
<dbReference type="STRING" id="9606.ENSP00000310472"/>
<dbReference type="iPTMnet" id="Q9P2J8"/>
<dbReference type="PhosphoSitePlus" id="Q9P2J8"/>
<dbReference type="BioMuta" id="ZNF624"/>
<dbReference type="DMDM" id="239938815"/>
<dbReference type="jPOST" id="Q9P2J8"/>
<dbReference type="MassIVE" id="Q9P2J8"/>
<dbReference type="PaxDb" id="9606-ENSP00000310472"/>
<dbReference type="PeptideAtlas" id="Q9P2J8"/>
<dbReference type="ProteomicsDB" id="83823">
    <molecule id="Q9P2J8-1"/>
</dbReference>
<dbReference type="ProteomicsDB" id="83824">
    <molecule id="Q9P2J8-2"/>
</dbReference>
<dbReference type="Pumba" id="Q9P2J8"/>
<dbReference type="Antibodypedia" id="13281">
    <property type="antibodies" value="92 antibodies from 18 providers"/>
</dbReference>
<dbReference type="DNASU" id="57547"/>
<dbReference type="Ensembl" id="ENST00000311331.12">
    <molecule id="Q9P2J8-1"/>
    <property type="protein sequence ID" value="ENSP00000310472.7"/>
    <property type="gene ID" value="ENSG00000197566.10"/>
</dbReference>
<dbReference type="GeneID" id="57547"/>
<dbReference type="KEGG" id="hsa:57547"/>
<dbReference type="MANE-Select" id="ENST00000311331.12">
    <property type="protein sequence ID" value="ENSP00000310472.7"/>
    <property type="RefSeq nucleotide sequence ID" value="NM_020787.4"/>
    <property type="RefSeq protein sequence ID" value="NP_065838.2"/>
</dbReference>
<dbReference type="UCSC" id="uc010cpi.3">
    <molecule id="Q9P2J8-1"/>
    <property type="organism name" value="human"/>
</dbReference>
<dbReference type="AGR" id="HGNC:29254"/>
<dbReference type="CTD" id="57547"/>
<dbReference type="GeneCards" id="ZNF624"/>
<dbReference type="HGNC" id="HGNC:29254">
    <property type="gene designation" value="ZNF624"/>
</dbReference>
<dbReference type="HPA" id="ENSG00000197566">
    <property type="expression patterns" value="Low tissue specificity"/>
</dbReference>
<dbReference type="neXtProt" id="NX_Q9P2J8"/>
<dbReference type="OpenTargets" id="ENSG00000197566"/>
<dbReference type="PharmGKB" id="PA134977006"/>
<dbReference type="VEuPathDB" id="HostDB:ENSG00000197566"/>
<dbReference type="eggNOG" id="KOG1721">
    <property type="taxonomic scope" value="Eukaryota"/>
</dbReference>
<dbReference type="GeneTree" id="ENSGT00940000163207"/>
<dbReference type="HOGENOM" id="CLU_002678_17_1_1"/>
<dbReference type="InParanoid" id="Q9P2J8"/>
<dbReference type="OMA" id="GGLWKWN"/>
<dbReference type="OrthoDB" id="9411774at2759"/>
<dbReference type="PAN-GO" id="Q9P2J8">
    <property type="GO annotations" value="4 GO annotations based on evolutionary models"/>
</dbReference>
<dbReference type="PhylomeDB" id="Q9P2J8"/>
<dbReference type="TreeFam" id="TF343410"/>
<dbReference type="PathwayCommons" id="Q9P2J8"/>
<dbReference type="Reactome" id="R-HSA-212436">
    <property type="pathway name" value="Generic Transcription Pathway"/>
</dbReference>
<dbReference type="SignaLink" id="Q9P2J8"/>
<dbReference type="BioGRID-ORCS" id="57547">
    <property type="hits" value="10 hits in 1166 CRISPR screens"/>
</dbReference>
<dbReference type="ChiTaRS" id="ZNF624">
    <property type="organism name" value="human"/>
</dbReference>
<dbReference type="GenomeRNAi" id="57547"/>
<dbReference type="Pharos" id="Q9P2J8">
    <property type="development level" value="Tdark"/>
</dbReference>
<dbReference type="PRO" id="PR:Q9P2J8"/>
<dbReference type="Proteomes" id="UP000005640">
    <property type="component" value="Chromosome 17"/>
</dbReference>
<dbReference type="RNAct" id="Q9P2J8">
    <property type="molecule type" value="protein"/>
</dbReference>
<dbReference type="Bgee" id="ENSG00000197566">
    <property type="expression patterns" value="Expressed in male germ line stem cell (sensu Vertebrata) in testis and 144 other cell types or tissues"/>
</dbReference>
<dbReference type="ExpressionAtlas" id="Q9P2J8">
    <property type="expression patterns" value="baseline and differential"/>
</dbReference>
<dbReference type="GO" id="GO:0005634">
    <property type="term" value="C:nucleus"/>
    <property type="evidence" value="ECO:0000318"/>
    <property type="project" value="GO_Central"/>
</dbReference>
<dbReference type="GO" id="GO:0000981">
    <property type="term" value="F:DNA-binding transcription factor activity, RNA polymerase II-specific"/>
    <property type="evidence" value="ECO:0000318"/>
    <property type="project" value="GO_Central"/>
</dbReference>
<dbReference type="GO" id="GO:0000978">
    <property type="term" value="F:RNA polymerase II cis-regulatory region sequence-specific DNA binding"/>
    <property type="evidence" value="ECO:0000318"/>
    <property type="project" value="GO_Central"/>
</dbReference>
<dbReference type="GO" id="GO:0008270">
    <property type="term" value="F:zinc ion binding"/>
    <property type="evidence" value="ECO:0007669"/>
    <property type="project" value="UniProtKB-KW"/>
</dbReference>
<dbReference type="GO" id="GO:0006357">
    <property type="term" value="P:regulation of transcription by RNA polymerase II"/>
    <property type="evidence" value="ECO:0000318"/>
    <property type="project" value="GO_Central"/>
</dbReference>
<dbReference type="CDD" id="cd07765">
    <property type="entry name" value="KRAB_A-box"/>
    <property type="match status" value="1"/>
</dbReference>
<dbReference type="FunFam" id="3.30.160.60:FF:000824">
    <property type="entry name" value="Zinc finger protein 184"/>
    <property type="match status" value="1"/>
</dbReference>
<dbReference type="FunFam" id="3.30.160.60:FF:000058">
    <property type="entry name" value="Zinc finger protein 2 homolog"/>
    <property type="match status" value="1"/>
</dbReference>
<dbReference type="FunFam" id="3.30.160.60:FF:000622">
    <property type="entry name" value="zinc finger protein 26 isoform X3"/>
    <property type="match status" value="2"/>
</dbReference>
<dbReference type="FunFam" id="3.30.160.60:FF:000608">
    <property type="entry name" value="zinc finger protein 286A isoform X1"/>
    <property type="match status" value="1"/>
</dbReference>
<dbReference type="FunFam" id="3.30.160.60:FF:002343">
    <property type="entry name" value="Zinc finger protein 33A"/>
    <property type="match status" value="3"/>
</dbReference>
<dbReference type="FunFam" id="3.30.160.60:FF:000016">
    <property type="entry name" value="zinc finger protein 37 homolog"/>
    <property type="match status" value="1"/>
</dbReference>
<dbReference type="FunFam" id="3.30.160.60:FF:002090">
    <property type="entry name" value="Zinc finger protein 473"/>
    <property type="match status" value="1"/>
</dbReference>
<dbReference type="FunFam" id="3.30.160.60:FF:002254">
    <property type="entry name" value="Zinc finger protein 540"/>
    <property type="match status" value="3"/>
</dbReference>
<dbReference type="FunFam" id="3.30.160.60:FF:000454">
    <property type="entry name" value="Zinc finger protein 624"/>
    <property type="match status" value="2"/>
</dbReference>
<dbReference type="FunFam" id="3.30.160.60:FF:000675">
    <property type="entry name" value="Zinc finger protein 624"/>
    <property type="match status" value="3"/>
</dbReference>
<dbReference type="FunFam" id="3.30.160.60:FF:000846">
    <property type="entry name" value="Zinc finger protein 624"/>
    <property type="match status" value="1"/>
</dbReference>
<dbReference type="FunFam" id="3.30.160.60:FF:001360">
    <property type="entry name" value="zinc finger protein 624"/>
    <property type="match status" value="1"/>
</dbReference>
<dbReference type="FunFam" id="3.30.160.60:FF:001911">
    <property type="entry name" value="zinc finger protein 624 isoform X1"/>
    <property type="match status" value="1"/>
</dbReference>
<dbReference type="Gene3D" id="6.10.140.140">
    <property type="match status" value="1"/>
</dbReference>
<dbReference type="Gene3D" id="3.30.160.60">
    <property type="entry name" value="Classic Zinc Finger"/>
    <property type="match status" value="21"/>
</dbReference>
<dbReference type="InterPro" id="IPR001909">
    <property type="entry name" value="KRAB"/>
</dbReference>
<dbReference type="InterPro" id="IPR036051">
    <property type="entry name" value="KRAB_dom_sf"/>
</dbReference>
<dbReference type="InterPro" id="IPR036236">
    <property type="entry name" value="Znf_C2H2_sf"/>
</dbReference>
<dbReference type="InterPro" id="IPR013087">
    <property type="entry name" value="Znf_C2H2_type"/>
</dbReference>
<dbReference type="PANTHER" id="PTHR14003">
    <property type="entry name" value="TRANSCRIPTIONAL REPRESSOR PROTEIN YY"/>
    <property type="match status" value="1"/>
</dbReference>
<dbReference type="PANTHER" id="PTHR14003:SF23">
    <property type="entry name" value="ZINC FINGER PROTEIN 143"/>
    <property type="match status" value="1"/>
</dbReference>
<dbReference type="Pfam" id="PF01352">
    <property type="entry name" value="KRAB"/>
    <property type="match status" value="1"/>
</dbReference>
<dbReference type="Pfam" id="PF00096">
    <property type="entry name" value="zf-C2H2"/>
    <property type="match status" value="21"/>
</dbReference>
<dbReference type="SMART" id="SM00349">
    <property type="entry name" value="KRAB"/>
    <property type="match status" value="1"/>
</dbReference>
<dbReference type="SMART" id="SM00355">
    <property type="entry name" value="ZnF_C2H2"/>
    <property type="match status" value="21"/>
</dbReference>
<dbReference type="SUPFAM" id="SSF57667">
    <property type="entry name" value="beta-beta-alpha zinc fingers"/>
    <property type="match status" value="11"/>
</dbReference>
<dbReference type="SUPFAM" id="SSF109640">
    <property type="entry name" value="KRAB domain (Kruppel-associated box)"/>
    <property type="match status" value="1"/>
</dbReference>
<dbReference type="PROSITE" id="PS50805">
    <property type="entry name" value="KRAB"/>
    <property type="match status" value="1"/>
</dbReference>
<dbReference type="PROSITE" id="PS00028">
    <property type="entry name" value="ZINC_FINGER_C2H2_1"/>
    <property type="match status" value="20"/>
</dbReference>
<dbReference type="PROSITE" id="PS50157">
    <property type="entry name" value="ZINC_FINGER_C2H2_2"/>
    <property type="match status" value="21"/>
</dbReference>
<accession>Q9P2J8</accession>
<accession>Q3SY62</accession>
<accession>Q3SY63</accession>
<accession>Q6ZN27</accession>
<proteinExistence type="evidence at protein level"/>
<protein>
    <recommendedName>
        <fullName>Zinc finger protein 624</fullName>
    </recommendedName>
</protein>